<name>URE3_PARPJ</name>
<reference key="1">
    <citation type="journal article" date="2011" name="J. Bacteriol.">
        <title>Complete genome sequence of the plant growth-promoting endophyte Burkholderia phytofirmans strain PsJN.</title>
        <authorList>
            <person name="Weilharter A."/>
            <person name="Mitter B."/>
            <person name="Shin M.V."/>
            <person name="Chain P.S."/>
            <person name="Nowak J."/>
            <person name="Sessitsch A."/>
        </authorList>
    </citation>
    <scope>NUCLEOTIDE SEQUENCE [LARGE SCALE GENOMIC DNA]</scope>
    <source>
        <strain>DSM 17436 / LMG 22146 / PsJN</strain>
    </source>
</reference>
<protein>
    <recommendedName>
        <fullName evidence="1">Urease subunit gamma</fullName>
        <ecNumber evidence="1">3.5.1.5</ecNumber>
    </recommendedName>
    <alternativeName>
        <fullName evidence="1">Urea amidohydrolase subunit gamma</fullName>
    </alternativeName>
</protein>
<evidence type="ECO:0000255" key="1">
    <source>
        <dbReference type="HAMAP-Rule" id="MF_00739"/>
    </source>
</evidence>
<organism>
    <name type="scientific">Paraburkholderia phytofirmans (strain DSM 17436 / LMG 22146 / PsJN)</name>
    <name type="common">Burkholderia phytofirmans</name>
    <dbReference type="NCBI Taxonomy" id="398527"/>
    <lineage>
        <taxon>Bacteria</taxon>
        <taxon>Pseudomonadati</taxon>
        <taxon>Pseudomonadota</taxon>
        <taxon>Betaproteobacteria</taxon>
        <taxon>Burkholderiales</taxon>
        <taxon>Burkholderiaceae</taxon>
        <taxon>Paraburkholderia</taxon>
    </lineage>
</organism>
<dbReference type="EC" id="3.5.1.5" evidence="1"/>
<dbReference type="EMBL" id="CP001052">
    <property type="protein sequence ID" value="ACD15349.1"/>
    <property type="molecule type" value="Genomic_DNA"/>
</dbReference>
<dbReference type="RefSeq" id="WP_012431981.1">
    <property type="nucleotide sequence ID" value="NC_010681.1"/>
</dbReference>
<dbReference type="SMR" id="B2T0P7"/>
<dbReference type="STRING" id="398527.Bphyt_0930"/>
<dbReference type="KEGG" id="bpy:Bphyt_0930"/>
<dbReference type="eggNOG" id="COG0831">
    <property type="taxonomic scope" value="Bacteria"/>
</dbReference>
<dbReference type="HOGENOM" id="CLU_145825_1_0_4"/>
<dbReference type="OrthoDB" id="9797217at2"/>
<dbReference type="UniPathway" id="UPA00258">
    <property type="reaction ID" value="UER00370"/>
</dbReference>
<dbReference type="Proteomes" id="UP000001739">
    <property type="component" value="Chromosome 1"/>
</dbReference>
<dbReference type="GO" id="GO:0005737">
    <property type="term" value="C:cytoplasm"/>
    <property type="evidence" value="ECO:0007669"/>
    <property type="project" value="UniProtKB-SubCell"/>
</dbReference>
<dbReference type="GO" id="GO:0016151">
    <property type="term" value="F:nickel cation binding"/>
    <property type="evidence" value="ECO:0007669"/>
    <property type="project" value="InterPro"/>
</dbReference>
<dbReference type="GO" id="GO:0009039">
    <property type="term" value="F:urease activity"/>
    <property type="evidence" value="ECO:0007669"/>
    <property type="project" value="UniProtKB-UniRule"/>
</dbReference>
<dbReference type="GO" id="GO:0043419">
    <property type="term" value="P:urea catabolic process"/>
    <property type="evidence" value="ECO:0007669"/>
    <property type="project" value="UniProtKB-UniRule"/>
</dbReference>
<dbReference type="CDD" id="cd00390">
    <property type="entry name" value="Urease_gamma"/>
    <property type="match status" value="1"/>
</dbReference>
<dbReference type="Gene3D" id="3.30.280.10">
    <property type="entry name" value="Urease, gamma-like subunit"/>
    <property type="match status" value="1"/>
</dbReference>
<dbReference type="HAMAP" id="MF_00739">
    <property type="entry name" value="Urease_gamma"/>
    <property type="match status" value="1"/>
</dbReference>
<dbReference type="InterPro" id="IPR012010">
    <property type="entry name" value="Urease_gamma"/>
</dbReference>
<dbReference type="InterPro" id="IPR002026">
    <property type="entry name" value="Urease_gamma/gamma-beta_su"/>
</dbReference>
<dbReference type="InterPro" id="IPR036463">
    <property type="entry name" value="Urease_gamma_sf"/>
</dbReference>
<dbReference type="InterPro" id="IPR050069">
    <property type="entry name" value="Urease_subunit"/>
</dbReference>
<dbReference type="NCBIfam" id="NF009712">
    <property type="entry name" value="PRK13241.1"/>
    <property type="match status" value="1"/>
</dbReference>
<dbReference type="NCBIfam" id="TIGR00193">
    <property type="entry name" value="urease_gam"/>
    <property type="match status" value="1"/>
</dbReference>
<dbReference type="PANTHER" id="PTHR33569">
    <property type="entry name" value="UREASE"/>
    <property type="match status" value="1"/>
</dbReference>
<dbReference type="PANTHER" id="PTHR33569:SF1">
    <property type="entry name" value="UREASE"/>
    <property type="match status" value="1"/>
</dbReference>
<dbReference type="Pfam" id="PF00547">
    <property type="entry name" value="Urease_gamma"/>
    <property type="match status" value="1"/>
</dbReference>
<dbReference type="PIRSF" id="PIRSF001223">
    <property type="entry name" value="Urease_gamma"/>
    <property type="match status" value="1"/>
</dbReference>
<dbReference type="SUPFAM" id="SSF54111">
    <property type="entry name" value="Urease, gamma-subunit"/>
    <property type="match status" value="1"/>
</dbReference>
<proteinExistence type="inferred from homology"/>
<feature type="chain" id="PRO_1000199857" description="Urease subunit gamma">
    <location>
        <begin position="1"/>
        <end position="100"/>
    </location>
</feature>
<gene>
    <name evidence="1" type="primary">ureA</name>
    <name type="ordered locus">Bphyt_0930</name>
</gene>
<accession>B2T0P7</accession>
<comment type="catalytic activity">
    <reaction evidence="1">
        <text>urea + 2 H2O + H(+) = hydrogencarbonate + 2 NH4(+)</text>
        <dbReference type="Rhea" id="RHEA:20557"/>
        <dbReference type="ChEBI" id="CHEBI:15377"/>
        <dbReference type="ChEBI" id="CHEBI:15378"/>
        <dbReference type="ChEBI" id="CHEBI:16199"/>
        <dbReference type="ChEBI" id="CHEBI:17544"/>
        <dbReference type="ChEBI" id="CHEBI:28938"/>
        <dbReference type="EC" id="3.5.1.5"/>
    </reaction>
</comment>
<comment type="pathway">
    <text evidence="1">Nitrogen metabolism; urea degradation; CO(2) and NH(3) from urea (urease route): step 1/1.</text>
</comment>
<comment type="subunit">
    <text evidence="1">Heterotrimer of UreA (gamma), UreB (beta) and UreC (alpha) subunits. Three heterotrimers associate to form the active enzyme.</text>
</comment>
<comment type="subcellular location">
    <subcellularLocation>
        <location evidence="1">Cytoplasm</location>
    </subcellularLocation>
</comment>
<comment type="similarity">
    <text evidence="1">Belongs to the urease gamma subunit family.</text>
</comment>
<sequence>MKLTPREKDKLLIFTAALLAERRRARGLKLNYPEAIAFITAALMEAARDGKTVAEVMHYGTTLLTRNDVMEGVPEMIPDIQVEATFPDGTKLVTVHHPIP</sequence>
<keyword id="KW-0963">Cytoplasm</keyword>
<keyword id="KW-0378">Hydrolase</keyword>